<sequence>MDKFSLSHMSVWQGRQDPEDGELALRWYDKVQAWPLSGTAEPGVALVGFACDEGVRRNKGRVGAAGAPLAIRKLLANSAWHLTRPVYDSGDLTCDDGDLDAAHARLAERVASLLDEGHFPLVLGGGHEVAFGSWNGLNRHLVGQGRVGIINFDAHFDLRRKVEQASSGTPFFQIAEQCTAQGTPFHYACLGVAETANTQALFARADALGVWYVKDEAMSERSLPALLSGLDSFIAQSDHIYLTIDLDVLPGAVMPGVSAPAARGVELAIIEPLIAHIQASGKLRLADLAEYNPNLDQDNRSARVAARLVHQLTK</sequence>
<evidence type="ECO:0000255" key="1">
    <source>
        <dbReference type="HAMAP-Rule" id="MF_00737"/>
    </source>
</evidence>
<name>HUTG_AERS4</name>
<reference key="1">
    <citation type="journal article" date="2008" name="BMC Genomics">
        <title>The genome of Aeromonas salmonicida subsp. salmonicida A449: insights into the evolution of a fish pathogen.</title>
        <authorList>
            <person name="Reith M.E."/>
            <person name="Singh R.K."/>
            <person name="Curtis B."/>
            <person name="Boyd J.M."/>
            <person name="Bouevitch A."/>
            <person name="Kimball J."/>
            <person name="Munholland J."/>
            <person name="Murphy C."/>
            <person name="Sarty D."/>
            <person name="Williams J."/>
            <person name="Nash J.H."/>
            <person name="Johnson S.C."/>
            <person name="Brown L.L."/>
        </authorList>
    </citation>
    <scope>NUCLEOTIDE SEQUENCE [LARGE SCALE GENOMIC DNA]</scope>
    <source>
        <strain>A449</strain>
    </source>
</reference>
<organism>
    <name type="scientific">Aeromonas salmonicida (strain A449)</name>
    <dbReference type="NCBI Taxonomy" id="382245"/>
    <lineage>
        <taxon>Bacteria</taxon>
        <taxon>Pseudomonadati</taxon>
        <taxon>Pseudomonadota</taxon>
        <taxon>Gammaproteobacteria</taxon>
        <taxon>Aeromonadales</taxon>
        <taxon>Aeromonadaceae</taxon>
        <taxon>Aeromonas</taxon>
    </lineage>
</organism>
<gene>
    <name evidence="1" type="primary">hutG</name>
    <name type="ordered locus">ASA_3954</name>
</gene>
<protein>
    <recommendedName>
        <fullName evidence="1">Formimidoylglutamase</fullName>
        <ecNumber evidence="1">3.5.3.8</ecNumber>
    </recommendedName>
    <alternativeName>
        <fullName evidence="1">Formiminoglutamase</fullName>
    </alternativeName>
    <alternativeName>
        <fullName evidence="1">Formiminoglutamate hydrolase</fullName>
    </alternativeName>
</protein>
<accession>A4SSN4</accession>
<dbReference type="EC" id="3.5.3.8" evidence="1"/>
<dbReference type="EMBL" id="CP000644">
    <property type="protein sequence ID" value="ABO91906.1"/>
    <property type="molecule type" value="Genomic_DNA"/>
</dbReference>
<dbReference type="RefSeq" id="WP_005316408.1">
    <property type="nucleotide sequence ID" value="NC_009348.1"/>
</dbReference>
<dbReference type="SMR" id="A4SSN4"/>
<dbReference type="STRING" id="29491.GCA_000820065_02689"/>
<dbReference type="KEGG" id="asa:ASA_3954"/>
<dbReference type="eggNOG" id="COG0010">
    <property type="taxonomic scope" value="Bacteria"/>
</dbReference>
<dbReference type="HOGENOM" id="CLU_039478_2_0_6"/>
<dbReference type="UniPathway" id="UPA00379">
    <property type="reaction ID" value="UER00552"/>
</dbReference>
<dbReference type="Proteomes" id="UP000000225">
    <property type="component" value="Chromosome"/>
</dbReference>
<dbReference type="GO" id="GO:0008783">
    <property type="term" value="F:agmatinase activity"/>
    <property type="evidence" value="ECO:0007669"/>
    <property type="project" value="TreeGrafter"/>
</dbReference>
<dbReference type="GO" id="GO:0050415">
    <property type="term" value="F:formimidoylglutamase activity"/>
    <property type="evidence" value="ECO:0007669"/>
    <property type="project" value="UniProtKB-UniRule"/>
</dbReference>
<dbReference type="GO" id="GO:0030145">
    <property type="term" value="F:manganese ion binding"/>
    <property type="evidence" value="ECO:0007669"/>
    <property type="project" value="UniProtKB-UniRule"/>
</dbReference>
<dbReference type="GO" id="GO:0019556">
    <property type="term" value="P:L-histidine catabolic process to glutamate and formamide"/>
    <property type="evidence" value="ECO:0007669"/>
    <property type="project" value="UniProtKB-UniPathway"/>
</dbReference>
<dbReference type="GO" id="GO:0019557">
    <property type="term" value="P:L-histidine catabolic process to glutamate and formate"/>
    <property type="evidence" value="ECO:0007669"/>
    <property type="project" value="UniProtKB-UniPathway"/>
</dbReference>
<dbReference type="GO" id="GO:0033389">
    <property type="term" value="P:putrescine biosynthetic process from arginine, via agmatine"/>
    <property type="evidence" value="ECO:0007669"/>
    <property type="project" value="TreeGrafter"/>
</dbReference>
<dbReference type="CDD" id="cd09988">
    <property type="entry name" value="Formimidoylglutamase"/>
    <property type="match status" value="1"/>
</dbReference>
<dbReference type="Gene3D" id="3.40.800.10">
    <property type="entry name" value="Ureohydrolase domain"/>
    <property type="match status" value="1"/>
</dbReference>
<dbReference type="HAMAP" id="MF_00737">
    <property type="entry name" value="Formimidoylglutam"/>
    <property type="match status" value="1"/>
</dbReference>
<dbReference type="InterPro" id="IPR005923">
    <property type="entry name" value="HutG"/>
</dbReference>
<dbReference type="InterPro" id="IPR006035">
    <property type="entry name" value="Ureohydrolase"/>
</dbReference>
<dbReference type="InterPro" id="IPR023696">
    <property type="entry name" value="Ureohydrolase_dom_sf"/>
</dbReference>
<dbReference type="NCBIfam" id="TIGR01227">
    <property type="entry name" value="hutG"/>
    <property type="match status" value="1"/>
</dbReference>
<dbReference type="PANTHER" id="PTHR11358">
    <property type="entry name" value="ARGINASE/AGMATINASE"/>
    <property type="match status" value="1"/>
</dbReference>
<dbReference type="PANTHER" id="PTHR11358:SF35">
    <property type="entry name" value="FORMIMIDOYLGLUTAMASE"/>
    <property type="match status" value="1"/>
</dbReference>
<dbReference type="Pfam" id="PF00491">
    <property type="entry name" value="Arginase"/>
    <property type="match status" value="1"/>
</dbReference>
<dbReference type="PRINTS" id="PR00116">
    <property type="entry name" value="ARGINASE"/>
</dbReference>
<dbReference type="SUPFAM" id="SSF52768">
    <property type="entry name" value="Arginase/deacetylase"/>
    <property type="match status" value="1"/>
</dbReference>
<dbReference type="PROSITE" id="PS51409">
    <property type="entry name" value="ARGINASE_2"/>
    <property type="match status" value="1"/>
</dbReference>
<keyword id="KW-0369">Histidine metabolism</keyword>
<keyword id="KW-0378">Hydrolase</keyword>
<keyword id="KW-0464">Manganese</keyword>
<keyword id="KW-0479">Metal-binding</keyword>
<proteinExistence type="inferred from homology"/>
<feature type="chain" id="PRO_1000046296" description="Formimidoylglutamase">
    <location>
        <begin position="1"/>
        <end position="314"/>
    </location>
</feature>
<feature type="binding site" evidence="1">
    <location>
        <position position="127"/>
    </location>
    <ligand>
        <name>Mn(2+)</name>
        <dbReference type="ChEBI" id="CHEBI:29035"/>
        <label>1</label>
    </ligand>
</feature>
<feature type="binding site" evidence="1">
    <location>
        <position position="153"/>
    </location>
    <ligand>
        <name>Mn(2+)</name>
        <dbReference type="ChEBI" id="CHEBI:29035"/>
        <label>1</label>
    </ligand>
</feature>
<feature type="binding site" evidence="1">
    <location>
        <position position="153"/>
    </location>
    <ligand>
        <name>Mn(2+)</name>
        <dbReference type="ChEBI" id="CHEBI:29035"/>
        <label>2</label>
    </ligand>
</feature>
<feature type="binding site" evidence="1">
    <location>
        <position position="155"/>
    </location>
    <ligand>
        <name>Mn(2+)</name>
        <dbReference type="ChEBI" id="CHEBI:29035"/>
        <label>2</label>
    </ligand>
</feature>
<feature type="binding site" evidence="1">
    <location>
        <position position="157"/>
    </location>
    <ligand>
        <name>Mn(2+)</name>
        <dbReference type="ChEBI" id="CHEBI:29035"/>
        <label>1</label>
    </ligand>
</feature>
<feature type="binding site" evidence="1">
    <location>
        <position position="245"/>
    </location>
    <ligand>
        <name>Mn(2+)</name>
        <dbReference type="ChEBI" id="CHEBI:29035"/>
        <label>1</label>
    </ligand>
</feature>
<feature type="binding site" evidence="1">
    <location>
        <position position="245"/>
    </location>
    <ligand>
        <name>Mn(2+)</name>
        <dbReference type="ChEBI" id="CHEBI:29035"/>
        <label>2</label>
    </ligand>
</feature>
<feature type="binding site" evidence="1">
    <location>
        <position position="247"/>
    </location>
    <ligand>
        <name>Mn(2+)</name>
        <dbReference type="ChEBI" id="CHEBI:29035"/>
        <label>2</label>
    </ligand>
</feature>
<comment type="function">
    <text evidence="1">Catalyzes the conversion of N-formimidoyl-L-glutamate to L-glutamate and formamide.</text>
</comment>
<comment type="catalytic activity">
    <reaction evidence="1">
        <text>N-formimidoyl-L-glutamate + H2O = formamide + L-glutamate</text>
        <dbReference type="Rhea" id="RHEA:22492"/>
        <dbReference type="ChEBI" id="CHEBI:15377"/>
        <dbReference type="ChEBI" id="CHEBI:16397"/>
        <dbReference type="ChEBI" id="CHEBI:29985"/>
        <dbReference type="ChEBI" id="CHEBI:58928"/>
        <dbReference type="EC" id="3.5.3.8"/>
    </reaction>
</comment>
<comment type="cofactor">
    <cofactor evidence="1">
        <name>Mn(2+)</name>
        <dbReference type="ChEBI" id="CHEBI:29035"/>
    </cofactor>
    <text evidence="1">Binds 2 manganese ions per subunit.</text>
</comment>
<comment type="pathway">
    <text evidence="1">Amino-acid degradation; L-histidine degradation into L-glutamate; L-glutamate from N-formimidoyl-L-glutamate (hydrolase route): step 1/1.</text>
</comment>
<comment type="similarity">
    <text evidence="1">Belongs to the arginase family.</text>
</comment>